<sequence length="766" mass="80801">MSPLARTPRKTSVLDTVEHAATTPDQPQPYGELGLKDDEYRRIRQILGRRPTDTELAMYSVMWSEHCSYKSSKVHLRYFGETTSDEMRAAMLAGIGENAGVVDIGDGWAVTFKVESHNHPSYVEPYQGAATGVGGIVRDIMAMGARPVAVMDQLRFGAADAPDTRRVLDGVVRGIGGYGNSLGLPNIGGETVFDPCYAGNPLVNALCVGVLRQEDLHLAFASGAGNKIILFGARTGLDGIGGVSVLASDTFDAEGSRKKLPSVQVGDPFMEKVLIECCLELYAGGLVIGIQDLGGAGLSCATSELASAGDGGMTIQLDSVPLRAKEMTPAEVLCSESQERMCAVVSPKNVDAFLAVCRKWEVLATVIGEVTDGDRLQITWHGETVVDVPPRTVAHEGPVYQRPVARPDTQDALNADRSAKLSRPVTGDELRATLLALLGSPHLCSRAFITEQYDRYVRGNTVLAEHADGGMLRIDQSTGRGIAVSTDASGRYTLLDPYAGAQLALAEAYRNVAVTGATPVAVTNCLNFGSPEDPGVMWQFTQAVRGLADGCADLGIPVTGGNVSFYNQTGSAAILPTPVVGVLGVIDDVRRRIPTGLGAEPGETLMLLGDTRDEFDGSVWAQVTADHLGGLPPVVDLAREKLLAAVLSSASRDGLVSAAHDLSEGGLAQAIVESALAGETGCRIVLPEGADPFVLLFSESAGRVLVAVPRTEESRFRGMCEARGLPAVRIGVVDQGSDAVEVQGLFAVSLAELRATSEAVLPRYFG</sequence>
<gene>
    <name evidence="2" type="primary">purL</name>
    <name type="ordered locus">MT0823</name>
</gene>
<proteinExistence type="inferred from homology"/>
<evidence type="ECO:0000250" key="1">
    <source>
        <dbReference type="UniProtKB" id="P9WHL7"/>
    </source>
</evidence>
<evidence type="ECO:0000255" key="2">
    <source>
        <dbReference type="HAMAP-Rule" id="MF_00420"/>
    </source>
</evidence>
<accession>P9WHL6</accession>
<accession>L0T4Y4</accession>
<accession>O06631</accession>
<accession>P0A5T8</accession>
<accession>P54876</accession>
<dbReference type="EC" id="6.3.5.3" evidence="2"/>
<dbReference type="EMBL" id="AE000516">
    <property type="protein sequence ID" value="AAK45065.1"/>
    <property type="status" value="ALT_INIT"/>
    <property type="molecule type" value="Genomic_DNA"/>
</dbReference>
<dbReference type="PIR" id="D70536">
    <property type="entry name" value="D70536"/>
</dbReference>
<dbReference type="SMR" id="P9WHL6"/>
<dbReference type="KEGG" id="mtc:MT0823"/>
<dbReference type="HOGENOM" id="CLU_003100_0_1_11"/>
<dbReference type="UniPathway" id="UPA00074">
    <property type="reaction ID" value="UER00128"/>
</dbReference>
<dbReference type="Proteomes" id="UP000001020">
    <property type="component" value="Chromosome"/>
</dbReference>
<dbReference type="GO" id="GO:0005737">
    <property type="term" value="C:cytoplasm"/>
    <property type="evidence" value="ECO:0007669"/>
    <property type="project" value="UniProtKB-SubCell"/>
</dbReference>
<dbReference type="GO" id="GO:0005524">
    <property type="term" value="F:ATP binding"/>
    <property type="evidence" value="ECO:0007669"/>
    <property type="project" value="UniProtKB-UniRule"/>
</dbReference>
<dbReference type="GO" id="GO:0000287">
    <property type="term" value="F:magnesium ion binding"/>
    <property type="evidence" value="ECO:0007669"/>
    <property type="project" value="UniProtKB-UniRule"/>
</dbReference>
<dbReference type="GO" id="GO:0004642">
    <property type="term" value="F:phosphoribosylformylglycinamidine synthase activity"/>
    <property type="evidence" value="ECO:0007669"/>
    <property type="project" value="UniProtKB-UniRule"/>
</dbReference>
<dbReference type="GO" id="GO:0006189">
    <property type="term" value="P:'de novo' IMP biosynthetic process"/>
    <property type="evidence" value="ECO:0007669"/>
    <property type="project" value="UniProtKB-UniRule"/>
</dbReference>
<dbReference type="CDD" id="cd02203">
    <property type="entry name" value="PurL_repeat1"/>
    <property type="match status" value="1"/>
</dbReference>
<dbReference type="CDD" id="cd02204">
    <property type="entry name" value="PurL_repeat2"/>
    <property type="match status" value="1"/>
</dbReference>
<dbReference type="FunFam" id="3.30.1330.10:FF:000004">
    <property type="entry name" value="Phosphoribosylformylglycinamidine synthase subunit PurL"/>
    <property type="match status" value="1"/>
</dbReference>
<dbReference type="FunFam" id="3.30.1330.10:FF:000021">
    <property type="entry name" value="Phosphoribosylformylglycinamidine synthase subunit PurL"/>
    <property type="match status" value="1"/>
</dbReference>
<dbReference type="FunFam" id="3.90.650.10:FF:000009">
    <property type="entry name" value="Phosphoribosylformylglycinamidine synthase subunit PurL"/>
    <property type="match status" value="1"/>
</dbReference>
<dbReference type="FunFam" id="3.90.650.10:FF:000026">
    <property type="entry name" value="Phosphoribosylformylglycinamidine synthase subunit PurL"/>
    <property type="match status" value="1"/>
</dbReference>
<dbReference type="Gene3D" id="3.90.650.10">
    <property type="entry name" value="PurM-like C-terminal domain"/>
    <property type="match status" value="2"/>
</dbReference>
<dbReference type="Gene3D" id="3.30.1330.10">
    <property type="entry name" value="PurM-like, N-terminal domain"/>
    <property type="match status" value="2"/>
</dbReference>
<dbReference type="HAMAP" id="MF_00420">
    <property type="entry name" value="PurL_2"/>
    <property type="match status" value="1"/>
</dbReference>
<dbReference type="InterPro" id="IPR010074">
    <property type="entry name" value="PRibForGlyAmidine_synth_PurL"/>
</dbReference>
<dbReference type="InterPro" id="IPR041609">
    <property type="entry name" value="PurL_linker"/>
</dbReference>
<dbReference type="InterPro" id="IPR010918">
    <property type="entry name" value="PurM-like_C_dom"/>
</dbReference>
<dbReference type="InterPro" id="IPR036676">
    <property type="entry name" value="PurM-like_C_sf"/>
</dbReference>
<dbReference type="InterPro" id="IPR016188">
    <property type="entry name" value="PurM-like_N"/>
</dbReference>
<dbReference type="InterPro" id="IPR036921">
    <property type="entry name" value="PurM-like_N_sf"/>
</dbReference>
<dbReference type="NCBIfam" id="TIGR01736">
    <property type="entry name" value="FGAM_synth_II"/>
    <property type="match status" value="1"/>
</dbReference>
<dbReference type="NCBIfam" id="NF002290">
    <property type="entry name" value="PRK01213.1"/>
    <property type="match status" value="1"/>
</dbReference>
<dbReference type="PANTHER" id="PTHR43555">
    <property type="entry name" value="PHOSPHORIBOSYLFORMYLGLYCINAMIDINE SYNTHASE SUBUNIT PURL"/>
    <property type="match status" value="1"/>
</dbReference>
<dbReference type="PANTHER" id="PTHR43555:SF1">
    <property type="entry name" value="PHOSPHORIBOSYLFORMYLGLYCINAMIDINE SYNTHASE SUBUNIT PURL"/>
    <property type="match status" value="1"/>
</dbReference>
<dbReference type="Pfam" id="PF00586">
    <property type="entry name" value="AIRS"/>
    <property type="match status" value="2"/>
</dbReference>
<dbReference type="Pfam" id="PF02769">
    <property type="entry name" value="AIRS_C"/>
    <property type="match status" value="2"/>
</dbReference>
<dbReference type="Pfam" id="PF18072">
    <property type="entry name" value="FGAR-AT_linker"/>
    <property type="match status" value="1"/>
</dbReference>
<dbReference type="PIRSF" id="PIRSF001587">
    <property type="entry name" value="FGAM_synthase_II"/>
    <property type="match status" value="1"/>
</dbReference>
<dbReference type="SUPFAM" id="SSF56042">
    <property type="entry name" value="PurM C-terminal domain-like"/>
    <property type="match status" value="2"/>
</dbReference>
<dbReference type="SUPFAM" id="SSF55326">
    <property type="entry name" value="PurM N-terminal domain-like"/>
    <property type="match status" value="2"/>
</dbReference>
<organism>
    <name type="scientific">Mycobacterium tuberculosis (strain CDC 1551 / Oshkosh)</name>
    <dbReference type="NCBI Taxonomy" id="83331"/>
    <lineage>
        <taxon>Bacteria</taxon>
        <taxon>Bacillati</taxon>
        <taxon>Actinomycetota</taxon>
        <taxon>Actinomycetes</taxon>
        <taxon>Mycobacteriales</taxon>
        <taxon>Mycobacteriaceae</taxon>
        <taxon>Mycobacterium</taxon>
        <taxon>Mycobacterium tuberculosis complex</taxon>
    </lineage>
</organism>
<protein>
    <recommendedName>
        <fullName evidence="2">Phosphoribosylformylglycinamidine synthase subunit PurL</fullName>
        <shortName evidence="2">FGAM synthase</shortName>
        <ecNumber evidence="2">6.3.5.3</ecNumber>
    </recommendedName>
    <alternativeName>
        <fullName evidence="2">Formylglycinamide ribonucleotide amidotransferase subunit II</fullName>
        <shortName evidence="2">FGAR amidotransferase II</shortName>
        <shortName evidence="2">FGAR-AT II</shortName>
    </alternativeName>
    <alternativeName>
        <fullName evidence="2">Glutamine amidotransferase PurL</fullName>
    </alternativeName>
    <alternativeName>
        <fullName evidence="2">Phosphoribosylformylglycinamidine synthase subunit II</fullName>
    </alternativeName>
</protein>
<feature type="chain" id="PRO_0000428163" description="Phosphoribosylformylglycinamidine synthase subunit PurL">
    <location>
        <begin position="1"/>
        <end position="766"/>
    </location>
</feature>
<feature type="active site" evidence="2">
    <location>
        <position position="66"/>
    </location>
</feature>
<feature type="active site" description="Proton acceptor" evidence="2">
    <location>
        <position position="117"/>
    </location>
</feature>
<feature type="binding site" evidence="2">
    <location>
        <position position="69"/>
    </location>
    <ligand>
        <name>ATP</name>
        <dbReference type="ChEBI" id="CHEBI:30616"/>
    </ligand>
</feature>
<feature type="binding site" evidence="2">
    <location>
        <position position="113"/>
    </location>
    <ligand>
        <name>ATP</name>
        <dbReference type="ChEBI" id="CHEBI:30616"/>
    </ligand>
</feature>
<feature type="binding site" evidence="2">
    <location>
        <position position="115"/>
    </location>
    <ligand>
        <name>Mg(2+)</name>
        <dbReference type="ChEBI" id="CHEBI:18420"/>
        <label>1</label>
    </ligand>
</feature>
<feature type="binding site" evidence="2">
    <location>
        <begin position="116"/>
        <end position="119"/>
    </location>
    <ligand>
        <name>substrate</name>
    </ligand>
</feature>
<feature type="binding site" evidence="2">
    <location>
        <position position="138"/>
    </location>
    <ligand>
        <name>substrate</name>
    </ligand>
</feature>
<feature type="binding site" evidence="2">
    <location>
        <position position="139"/>
    </location>
    <ligand>
        <name>Mg(2+)</name>
        <dbReference type="ChEBI" id="CHEBI:18420"/>
        <label>2</label>
    </ligand>
</feature>
<feature type="binding site" evidence="2">
    <location>
        <position position="264"/>
    </location>
    <ligand>
        <name>substrate</name>
    </ligand>
</feature>
<feature type="binding site" evidence="2">
    <location>
        <position position="292"/>
    </location>
    <ligand>
        <name>Mg(2+)</name>
        <dbReference type="ChEBI" id="CHEBI:18420"/>
        <label>2</label>
    </ligand>
</feature>
<feature type="binding site" evidence="2">
    <location>
        <begin position="336"/>
        <end position="338"/>
    </location>
    <ligand>
        <name>substrate</name>
    </ligand>
</feature>
<feature type="binding site" evidence="2">
    <location>
        <position position="524"/>
    </location>
    <ligand>
        <name>ATP</name>
        <dbReference type="ChEBI" id="CHEBI:30616"/>
    </ligand>
</feature>
<feature type="binding site" evidence="2">
    <location>
        <position position="561"/>
    </location>
    <ligand>
        <name>ATP</name>
        <dbReference type="ChEBI" id="CHEBI:30616"/>
    </ligand>
</feature>
<feature type="binding site" evidence="2">
    <location>
        <position position="562"/>
    </location>
    <ligand>
        <name>Mg(2+)</name>
        <dbReference type="ChEBI" id="CHEBI:18420"/>
        <label>1</label>
    </ligand>
</feature>
<feature type="binding site" evidence="2">
    <location>
        <position position="564"/>
    </location>
    <ligand>
        <name>substrate</name>
    </ligand>
</feature>
<comment type="function">
    <text evidence="2">Part of the phosphoribosylformylglycinamidine synthase complex involved in the purines biosynthetic pathway. Catalyzes the ATP-dependent conversion of formylglycinamide ribonucleotide (FGAR) and glutamine to yield formylglycinamidine ribonucleotide (FGAM) and glutamate. The FGAM synthase complex is composed of three subunits. PurQ produces an ammonia molecule by converting glutamine to glutamate. PurL transfers the ammonia molecule to FGAR to form FGAM in an ATP-dependent manner. PurS interacts with PurQ and PurL and is thought to assist in the transfer of the ammonia molecule from PurQ to PurL.</text>
</comment>
<comment type="catalytic activity">
    <reaction evidence="2">
        <text>N(2)-formyl-N(1)-(5-phospho-beta-D-ribosyl)glycinamide + L-glutamine + ATP + H2O = 2-formamido-N(1)-(5-O-phospho-beta-D-ribosyl)acetamidine + L-glutamate + ADP + phosphate + H(+)</text>
        <dbReference type="Rhea" id="RHEA:17129"/>
        <dbReference type="ChEBI" id="CHEBI:15377"/>
        <dbReference type="ChEBI" id="CHEBI:15378"/>
        <dbReference type="ChEBI" id="CHEBI:29985"/>
        <dbReference type="ChEBI" id="CHEBI:30616"/>
        <dbReference type="ChEBI" id="CHEBI:43474"/>
        <dbReference type="ChEBI" id="CHEBI:58359"/>
        <dbReference type="ChEBI" id="CHEBI:147286"/>
        <dbReference type="ChEBI" id="CHEBI:147287"/>
        <dbReference type="ChEBI" id="CHEBI:456216"/>
        <dbReference type="EC" id="6.3.5.3"/>
    </reaction>
</comment>
<comment type="pathway">
    <text evidence="2">Purine metabolism; IMP biosynthesis via de novo pathway; 5-amino-1-(5-phospho-D-ribosyl)imidazole from N(2)-formyl-N(1)-(5-phospho-D-ribosyl)glycinamide: step 1/2.</text>
</comment>
<comment type="subunit">
    <text evidence="2">Monomer. Part of the FGAM synthase complex composed of 1 PurL, 1 PurQ and 2 PurS subunits.</text>
</comment>
<comment type="subcellular location">
    <subcellularLocation>
        <location evidence="2">Cytoplasm</location>
    </subcellularLocation>
</comment>
<comment type="similarity">
    <text evidence="2">Belongs to the FGAMS family.</text>
</comment>
<comment type="sequence caution" evidence="1">
    <conflict type="erroneous initiation">
        <sequence resource="EMBL-CDS" id="AAK45065"/>
    </conflict>
    <text>Truncated N-terminus.</text>
</comment>
<name>PURL_MYCTO</name>
<keyword id="KW-0067">ATP-binding</keyword>
<keyword id="KW-0963">Cytoplasm</keyword>
<keyword id="KW-0436">Ligase</keyword>
<keyword id="KW-0460">Magnesium</keyword>
<keyword id="KW-0479">Metal-binding</keyword>
<keyword id="KW-0547">Nucleotide-binding</keyword>
<keyword id="KW-0658">Purine biosynthesis</keyword>
<keyword id="KW-1185">Reference proteome</keyword>
<reference key="1">
    <citation type="journal article" date="2002" name="J. Bacteriol.">
        <title>Whole-genome comparison of Mycobacterium tuberculosis clinical and laboratory strains.</title>
        <authorList>
            <person name="Fleischmann R.D."/>
            <person name="Alland D."/>
            <person name="Eisen J.A."/>
            <person name="Carpenter L."/>
            <person name="White O."/>
            <person name="Peterson J.D."/>
            <person name="DeBoy R.T."/>
            <person name="Dodson R.J."/>
            <person name="Gwinn M.L."/>
            <person name="Haft D.H."/>
            <person name="Hickey E.K."/>
            <person name="Kolonay J.F."/>
            <person name="Nelson W.C."/>
            <person name="Umayam L.A."/>
            <person name="Ermolaeva M.D."/>
            <person name="Salzberg S.L."/>
            <person name="Delcher A."/>
            <person name="Utterback T.R."/>
            <person name="Weidman J.F."/>
            <person name="Khouri H.M."/>
            <person name="Gill J."/>
            <person name="Mikula A."/>
            <person name="Bishai W."/>
            <person name="Jacobs W.R. Jr."/>
            <person name="Venter J.C."/>
            <person name="Fraser C.M."/>
        </authorList>
    </citation>
    <scope>NUCLEOTIDE SEQUENCE [LARGE SCALE GENOMIC DNA]</scope>
    <source>
        <strain>CDC 1551 / Oshkosh</strain>
    </source>
</reference>